<organism>
    <name type="scientific">Homo sapiens</name>
    <name type="common">Human</name>
    <dbReference type="NCBI Taxonomy" id="9606"/>
    <lineage>
        <taxon>Eukaryota</taxon>
        <taxon>Metazoa</taxon>
        <taxon>Chordata</taxon>
        <taxon>Craniata</taxon>
        <taxon>Vertebrata</taxon>
        <taxon>Euteleostomi</taxon>
        <taxon>Mammalia</taxon>
        <taxon>Eutheria</taxon>
        <taxon>Euarchontoglires</taxon>
        <taxon>Primates</taxon>
        <taxon>Haplorrhini</taxon>
        <taxon>Catarrhini</taxon>
        <taxon>Hominidae</taxon>
        <taxon>Homo</taxon>
    </lineage>
</organism>
<keyword id="KW-0025">Alternative splicing</keyword>
<keyword id="KW-0067">ATP-binding</keyword>
<keyword id="KW-0131">Cell cycle</keyword>
<keyword id="KW-0132">Cell division</keyword>
<keyword id="KW-0966">Cell projection</keyword>
<keyword id="KW-0175">Coiled coil</keyword>
<keyword id="KW-0963">Cytoplasm</keyword>
<keyword id="KW-0206">Cytoskeleton</keyword>
<keyword id="KW-0493">Microtubule</keyword>
<keyword id="KW-0498">Mitosis</keyword>
<keyword id="KW-0505">Motor protein</keyword>
<keyword id="KW-0547">Nucleotide-binding</keyword>
<keyword id="KW-0539">Nucleus</keyword>
<keyword id="KW-0553">Oncogene</keyword>
<keyword id="KW-0597">Phosphoprotein</keyword>
<keyword id="KW-1267">Proteomics identification</keyword>
<keyword id="KW-1185">Reference proteome</keyword>
<proteinExistence type="evidence at protein level"/>
<evidence type="ECO:0000250" key="1">
    <source>
        <dbReference type="UniProtKB" id="Q80WE4"/>
    </source>
</evidence>
<evidence type="ECO:0000255" key="2"/>
<evidence type="ECO:0000255" key="3">
    <source>
        <dbReference type="PROSITE-ProRule" id="PRU00283"/>
    </source>
</evidence>
<evidence type="ECO:0000256" key="4">
    <source>
        <dbReference type="SAM" id="MobiDB-lite"/>
    </source>
</evidence>
<evidence type="ECO:0000269" key="5">
    <source>
    </source>
</evidence>
<evidence type="ECO:0000269" key="6">
    <source>
    </source>
</evidence>
<evidence type="ECO:0000269" key="7">
    <source>
    </source>
</evidence>
<evidence type="ECO:0000269" key="8">
    <source>
    </source>
</evidence>
<evidence type="ECO:0000269" key="9">
    <source>
    </source>
</evidence>
<evidence type="ECO:0000269" key="10">
    <source>
    </source>
</evidence>
<evidence type="ECO:0000269" key="11">
    <source>
    </source>
</evidence>
<evidence type="ECO:0000269" key="12">
    <source>
    </source>
</evidence>
<evidence type="ECO:0000269" key="13">
    <source ref="9"/>
</evidence>
<evidence type="ECO:0000303" key="14">
    <source>
    </source>
</evidence>
<evidence type="ECO:0000303" key="15">
    <source>
    </source>
</evidence>
<evidence type="ECO:0000303" key="16">
    <source>
    </source>
</evidence>
<evidence type="ECO:0000303" key="17">
    <source>
    </source>
</evidence>
<evidence type="ECO:0000303" key="18">
    <source>
    </source>
</evidence>
<evidence type="ECO:0000303" key="19">
    <source>
    </source>
</evidence>
<evidence type="ECO:0000303" key="20">
    <source ref="9"/>
</evidence>
<evidence type="ECO:0000305" key="21"/>
<evidence type="ECO:0000312" key="22">
    <source>
        <dbReference type="HGNC" id="HGNC:7212"/>
    </source>
</evidence>
<evidence type="ECO:0007744" key="23">
    <source>
    </source>
</evidence>
<evidence type="ECO:0007744" key="24">
    <source>
    </source>
</evidence>
<evidence type="ECO:0007744" key="25">
    <source>
    </source>
</evidence>
<dbReference type="EMBL" id="AB033337">
    <property type="protein sequence ID" value="BAB69456.1"/>
    <property type="molecule type" value="mRNA"/>
</dbReference>
<dbReference type="EMBL" id="AB033338">
    <property type="protein sequence ID" value="BAB20417.1"/>
    <property type="molecule type" value="mRNA"/>
</dbReference>
<dbReference type="EMBL" id="AL117496">
    <property type="protein sequence ID" value="CAB55962.1"/>
    <property type="molecule type" value="mRNA"/>
</dbReference>
<dbReference type="EMBL" id="AK024959">
    <property type="protein sequence ID" value="BAB15043.1"/>
    <property type="status" value="ALT_SEQ"/>
    <property type="molecule type" value="mRNA"/>
</dbReference>
<dbReference type="EMBL" id="AK025628">
    <property type="protein sequence ID" value="BAB15194.1"/>
    <property type="molecule type" value="mRNA"/>
</dbReference>
<dbReference type="EMBL" id="AL157389">
    <property type="status" value="NOT_ANNOTATED_CDS"/>
    <property type="molecule type" value="Genomic_DNA"/>
</dbReference>
<dbReference type="EMBL" id="AL157400">
    <property type="status" value="NOT_ANNOTATED_CDS"/>
    <property type="molecule type" value="Genomic_DNA"/>
</dbReference>
<dbReference type="EMBL" id="AY282406">
    <property type="protein sequence ID" value="AAP40330.1"/>
    <property type="molecule type" value="mRNA"/>
</dbReference>
<dbReference type="EMBL" id="AY282407">
    <property type="protein sequence ID" value="AAP40331.1"/>
    <property type="molecule type" value="mRNA"/>
</dbReference>
<dbReference type="EMBL" id="BC046134">
    <property type="protein sequence ID" value="AAH46134.1"/>
    <property type="status" value="ALT_SEQ"/>
    <property type="molecule type" value="mRNA"/>
</dbReference>
<dbReference type="EMBL" id="BC058913">
    <property type="protein sequence ID" value="AAH58913.1"/>
    <property type="status" value="ALT_SEQ"/>
    <property type="molecule type" value="mRNA"/>
</dbReference>
<dbReference type="EMBL" id="BC093089">
    <property type="protein sequence ID" value="AAH93089.1"/>
    <property type="status" value="ALT_SEQ"/>
    <property type="molecule type" value="mRNA"/>
</dbReference>
<dbReference type="EMBL" id="BC108688">
    <property type="protein sequence ID" value="AAI08689.1"/>
    <property type="status" value="ALT_SEQ"/>
    <property type="molecule type" value="mRNA"/>
</dbReference>
<dbReference type="EMBL" id="AL137392">
    <property type="protein sequence ID" value="CAB70720.1"/>
    <property type="molecule type" value="mRNA"/>
</dbReference>
<dbReference type="EMBL" id="U93121">
    <property type="protein sequence ID" value="AAB88727.1"/>
    <property type="molecule type" value="mRNA"/>
</dbReference>
<dbReference type="EMBL" id="AY739715">
    <property type="protein sequence ID" value="AAW65984.1"/>
    <property type="molecule type" value="mRNA"/>
</dbReference>
<dbReference type="EMBL" id="L16782">
    <property type="protein sequence ID" value="AAC37542.1"/>
    <property type="molecule type" value="mRNA"/>
</dbReference>
<dbReference type="CCDS" id="CCDS60590.1">
    <molecule id="Q96Q89-1"/>
</dbReference>
<dbReference type="CCDS" id="CCDS7407.1">
    <molecule id="Q96Q89-3"/>
</dbReference>
<dbReference type="PIR" id="T17272">
    <property type="entry name" value="T17272"/>
</dbReference>
<dbReference type="RefSeq" id="NP_001271188.1">
    <molecule id="Q96Q89-1"/>
    <property type="nucleotide sequence ID" value="NM_001284259.2"/>
</dbReference>
<dbReference type="RefSeq" id="NP_057279.2">
    <molecule id="Q96Q89-3"/>
    <property type="nucleotide sequence ID" value="NM_016195.3"/>
</dbReference>
<dbReference type="SMR" id="Q96Q89"/>
<dbReference type="BioGRID" id="114953">
    <property type="interactions" value="91"/>
</dbReference>
<dbReference type="DIP" id="DIP-103N"/>
<dbReference type="FunCoup" id="Q96Q89">
    <property type="interactions" value="1370"/>
</dbReference>
<dbReference type="IntAct" id="Q96Q89">
    <property type="interactions" value="45"/>
</dbReference>
<dbReference type="MINT" id="Q96Q89"/>
<dbReference type="STRING" id="9606.ENSP00000360793"/>
<dbReference type="BindingDB" id="Q96Q89"/>
<dbReference type="ChEMBL" id="CHEMBL2021752"/>
<dbReference type="CarbonylDB" id="Q96Q89"/>
<dbReference type="GlyCosmos" id="Q96Q89">
    <property type="glycosylation" value="3 sites, 2 glycans"/>
</dbReference>
<dbReference type="GlyGen" id="Q96Q89">
    <property type="glycosylation" value="7 sites, 2 N-linked glycans (2 sites), 2 O-linked glycans (5 sites)"/>
</dbReference>
<dbReference type="iPTMnet" id="Q96Q89"/>
<dbReference type="PhosphoSitePlus" id="Q96Q89"/>
<dbReference type="SwissPalm" id="Q96Q89"/>
<dbReference type="BioMuta" id="KIF20B"/>
<dbReference type="DMDM" id="308153587"/>
<dbReference type="jPOST" id="Q96Q89"/>
<dbReference type="MassIVE" id="Q96Q89"/>
<dbReference type="PaxDb" id="9606-ENSP00000360793"/>
<dbReference type="PeptideAtlas" id="Q96Q89"/>
<dbReference type="ProteomicsDB" id="77838">
    <molecule id="Q96Q89-1"/>
</dbReference>
<dbReference type="ProteomicsDB" id="77839">
    <molecule id="Q96Q89-2"/>
</dbReference>
<dbReference type="ProteomicsDB" id="77840">
    <molecule id="Q96Q89-3"/>
</dbReference>
<dbReference type="ProteomicsDB" id="77841">
    <molecule id="Q96Q89-4"/>
</dbReference>
<dbReference type="ProteomicsDB" id="77842">
    <molecule id="Q96Q89-5"/>
</dbReference>
<dbReference type="Pumba" id="Q96Q89"/>
<dbReference type="Antibodypedia" id="30294">
    <property type="antibodies" value="90 antibodies from 21 providers"/>
</dbReference>
<dbReference type="DNASU" id="9585"/>
<dbReference type="Ensembl" id="ENST00000260753.8">
    <molecule id="Q96Q89-3"/>
    <property type="protein sequence ID" value="ENSP00000260753.4"/>
    <property type="gene ID" value="ENSG00000138182.15"/>
</dbReference>
<dbReference type="Ensembl" id="ENST00000371728.8">
    <molecule id="Q96Q89-1"/>
    <property type="protein sequence ID" value="ENSP00000360793.3"/>
    <property type="gene ID" value="ENSG00000138182.15"/>
</dbReference>
<dbReference type="GeneID" id="9585"/>
<dbReference type="KEGG" id="hsa:9585"/>
<dbReference type="MANE-Select" id="ENST00000371728.8">
    <property type="protein sequence ID" value="ENSP00000360793.3"/>
    <property type="RefSeq nucleotide sequence ID" value="NM_001284259.2"/>
    <property type="RefSeq protein sequence ID" value="NP_001271188.1"/>
</dbReference>
<dbReference type="UCSC" id="uc001kgr.3">
    <molecule id="Q96Q89-1"/>
    <property type="organism name" value="human"/>
</dbReference>
<dbReference type="AGR" id="HGNC:7212"/>
<dbReference type="CTD" id="9585"/>
<dbReference type="DisGeNET" id="9585"/>
<dbReference type="GeneCards" id="KIF20B"/>
<dbReference type="HGNC" id="HGNC:7212">
    <property type="gene designation" value="KIF20B"/>
</dbReference>
<dbReference type="HPA" id="ENSG00000138182">
    <property type="expression patterns" value="Tissue enhanced (bone marrow, lymphoid tissue)"/>
</dbReference>
<dbReference type="MIM" id="605498">
    <property type="type" value="gene"/>
</dbReference>
<dbReference type="neXtProt" id="NX_Q96Q89"/>
<dbReference type="OpenTargets" id="ENSG00000138182"/>
<dbReference type="PharmGKB" id="PA162393285"/>
<dbReference type="VEuPathDB" id="HostDB:ENSG00000138182"/>
<dbReference type="eggNOG" id="KOG0247">
    <property type="taxonomic scope" value="Eukaryota"/>
</dbReference>
<dbReference type="GeneTree" id="ENSGT00940000155989"/>
<dbReference type="HOGENOM" id="CLU_002380_0_0_1"/>
<dbReference type="InParanoid" id="Q96Q89"/>
<dbReference type="OMA" id="WSLKATY"/>
<dbReference type="OrthoDB" id="123929at2759"/>
<dbReference type="PAN-GO" id="Q96Q89">
    <property type="GO annotations" value="7 GO annotations based on evolutionary models"/>
</dbReference>
<dbReference type="PhylomeDB" id="Q96Q89"/>
<dbReference type="TreeFam" id="TF105232"/>
<dbReference type="PathwayCommons" id="Q96Q89"/>
<dbReference type="Reactome" id="R-HSA-6811434">
    <property type="pathway name" value="COPI-dependent Golgi-to-ER retrograde traffic"/>
</dbReference>
<dbReference type="Reactome" id="R-HSA-983189">
    <property type="pathway name" value="Kinesins"/>
</dbReference>
<dbReference type="SignaLink" id="Q96Q89"/>
<dbReference type="SIGNOR" id="Q96Q89"/>
<dbReference type="BioGRID-ORCS" id="9585">
    <property type="hits" value="66 hits in 1167 CRISPR screens"/>
</dbReference>
<dbReference type="CD-CODE" id="8C2F96ED">
    <property type="entry name" value="Centrosome"/>
</dbReference>
<dbReference type="CD-CODE" id="91857CE7">
    <property type="entry name" value="Nucleolus"/>
</dbReference>
<dbReference type="CD-CODE" id="FB4E32DD">
    <property type="entry name" value="Presynaptic clusters and postsynaptic densities"/>
</dbReference>
<dbReference type="ChiTaRS" id="KIF20B">
    <property type="organism name" value="human"/>
</dbReference>
<dbReference type="GeneWiki" id="MPHOSPH1"/>
<dbReference type="GenomeRNAi" id="9585"/>
<dbReference type="Pharos" id="Q96Q89">
    <property type="development level" value="Tbio"/>
</dbReference>
<dbReference type="PRO" id="PR:Q96Q89"/>
<dbReference type="Proteomes" id="UP000005640">
    <property type="component" value="Chromosome 10"/>
</dbReference>
<dbReference type="RNAct" id="Q96Q89">
    <property type="molecule type" value="protein"/>
</dbReference>
<dbReference type="Bgee" id="ENSG00000138182">
    <property type="expression patterns" value="Expressed in male germ line stem cell (sensu Vertebrata) in testis and 132 other cell types or tissues"/>
</dbReference>
<dbReference type="ExpressionAtlas" id="Q96Q89">
    <property type="expression patterns" value="baseline and differential"/>
</dbReference>
<dbReference type="GO" id="GO:0005813">
    <property type="term" value="C:centrosome"/>
    <property type="evidence" value="ECO:0000314"/>
    <property type="project" value="HPA"/>
</dbReference>
<dbReference type="GO" id="GO:0036064">
    <property type="term" value="C:ciliary basal body"/>
    <property type="evidence" value="ECO:0000314"/>
    <property type="project" value="HPA"/>
</dbReference>
<dbReference type="GO" id="GO:0070938">
    <property type="term" value="C:contractile ring"/>
    <property type="evidence" value="ECO:0000314"/>
    <property type="project" value="UniProtKB"/>
</dbReference>
<dbReference type="GO" id="GO:0005737">
    <property type="term" value="C:cytoplasm"/>
    <property type="evidence" value="ECO:0000314"/>
    <property type="project" value="UniProtKB"/>
</dbReference>
<dbReference type="GO" id="GO:0005829">
    <property type="term" value="C:cytosol"/>
    <property type="evidence" value="ECO:0000314"/>
    <property type="project" value="HPA"/>
</dbReference>
<dbReference type="GO" id="GO:0030426">
    <property type="term" value="C:growth cone"/>
    <property type="evidence" value="ECO:0007669"/>
    <property type="project" value="UniProtKB-SubCell"/>
</dbReference>
<dbReference type="GO" id="GO:0045171">
    <property type="term" value="C:intercellular bridge"/>
    <property type="evidence" value="ECO:0000314"/>
    <property type="project" value="HPA"/>
</dbReference>
<dbReference type="GO" id="GO:0005871">
    <property type="term" value="C:kinesin complex"/>
    <property type="evidence" value="ECO:0000318"/>
    <property type="project" value="GO_Central"/>
</dbReference>
<dbReference type="GO" id="GO:0005874">
    <property type="term" value="C:microtubule"/>
    <property type="evidence" value="ECO:0000318"/>
    <property type="project" value="GO_Central"/>
</dbReference>
<dbReference type="GO" id="GO:0030496">
    <property type="term" value="C:midbody"/>
    <property type="evidence" value="ECO:0000314"/>
    <property type="project" value="HPA"/>
</dbReference>
<dbReference type="GO" id="GO:1990023">
    <property type="term" value="C:mitotic spindle midzone"/>
    <property type="evidence" value="ECO:0000314"/>
    <property type="project" value="UniProtKB"/>
</dbReference>
<dbReference type="GO" id="GO:0097431">
    <property type="term" value="C:mitotic spindle pole"/>
    <property type="evidence" value="ECO:0000314"/>
    <property type="project" value="UniProtKB"/>
</dbReference>
<dbReference type="GO" id="GO:0005730">
    <property type="term" value="C:nucleolus"/>
    <property type="evidence" value="ECO:0000314"/>
    <property type="project" value="UniProtKB"/>
</dbReference>
<dbReference type="GO" id="GO:0005654">
    <property type="term" value="C:nucleoplasm"/>
    <property type="evidence" value="ECO:0000314"/>
    <property type="project" value="HPA"/>
</dbReference>
<dbReference type="GO" id="GO:0005634">
    <property type="term" value="C:nucleus"/>
    <property type="evidence" value="ECO:0000314"/>
    <property type="project" value="UniProtKB"/>
</dbReference>
<dbReference type="GO" id="GO:0048471">
    <property type="term" value="C:perinuclear region of cytoplasm"/>
    <property type="evidence" value="ECO:0000250"/>
    <property type="project" value="UniProtKB"/>
</dbReference>
<dbReference type="GO" id="GO:0051233">
    <property type="term" value="C:spindle midzone"/>
    <property type="evidence" value="ECO:0000250"/>
    <property type="project" value="UniProtKB"/>
</dbReference>
<dbReference type="GO" id="GO:0005524">
    <property type="term" value="F:ATP binding"/>
    <property type="evidence" value="ECO:0007669"/>
    <property type="project" value="UniProtKB-KW"/>
</dbReference>
<dbReference type="GO" id="GO:0016887">
    <property type="term" value="F:ATP hydrolysis activity"/>
    <property type="evidence" value="ECO:0000314"/>
    <property type="project" value="UniProtKB"/>
</dbReference>
<dbReference type="GO" id="GO:0008017">
    <property type="term" value="F:microtubule binding"/>
    <property type="evidence" value="ECO:0000314"/>
    <property type="project" value="UniProtKB"/>
</dbReference>
<dbReference type="GO" id="GO:0003777">
    <property type="term" value="F:microtubule motor activity"/>
    <property type="evidence" value="ECO:0000318"/>
    <property type="project" value="GO_Central"/>
</dbReference>
<dbReference type="GO" id="GO:0008574">
    <property type="term" value="F:plus-end-directed microtubule motor activity"/>
    <property type="evidence" value="ECO:0000314"/>
    <property type="project" value="UniProtKB"/>
</dbReference>
<dbReference type="GO" id="GO:0042803">
    <property type="term" value="F:protein homodimerization activity"/>
    <property type="evidence" value="ECO:0000314"/>
    <property type="project" value="UniProtKB"/>
</dbReference>
<dbReference type="GO" id="GO:0050699">
    <property type="term" value="F:WW domain binding"/>
    <property type="evidence" value="ECO:0000353"/>
    <property type="project" value="UniProtKB"/>
</dbReference>
<dbReference type="GO" id="GO:0051301">
    <property type="term" value="P:cell division"/>
    <property type="evidence" value="ECO:0007669"/>
    <property type="project" value="UniProtKB-KW"/>
</dbReference>
<dbReference type="GO" id="GO:0007018">
    <property type="term" value="P:microtubule-based movement"/>
    <property type="evidence" value="ECO:0000318"/>
    <property type="project" value="GO_Central"/>
</dbReference>
<dbReference type="GO" id="GO:0001843">
    <property type="term" value="P:neural tube closure"/>
    <property type="evidence" value="ECO:0007669"/>
    <property type="project" value="Ensembl"/>
</dbReference>
<dbReference type="GO" id="GO:0048812">
    <property type="term" value="P:neuron projection morphogenesis"/>
    <property type="evidence" value="ECO:0000250"/>
    <property type="project" value="UniProtKB"/>
</dbReference>
<dbReference type="GO" id="GO:0008284">
    <property type="term" value="P:positive regulation of cell population proliferation"/>
    <property type="evidence" value="ECO:0000315"/>
    <property type="project" value="UniProtKB"/>
</dbReference>
<dbReference type="GO" id="GO:0032467">
    <property type="term" value="P:positive regulation of cytokinesis"/>
    <property type="evidence" value="ECO:0000315"/>
    <property type="project" value="UniProtKB"/>
</dbReference>
<dbReference type="GO" id="GO:0090316">
    <property type="term" value="P:positive regulation of intracellular protein transport"/>
    <property type="evidence" value="ECO:0000250"/>
    <property type="project" value="UniProtKB"/>
</dbReference>
<dbReference type="GO" id="GO:1903438">
    <property type="term" value="P:positive regulation of mitotic cytokinetic process"/>
    <property type="evidence" value="ECO:0000250"/>
    <property type="project" value="UniProtKB"/>
</dbReference>
<dbReference type="GO" id="GO:2001224">
    <property type="term" value="P:positive regulation of neuron migration"/>
    <property type="evidence" value="ECO:0000250"/>
    <property type="project" value="UniProtKB"/>
</dbReference>
<dbReference type="GO" id="GO:0035372">
    <property type="term" value="P:protein localization to microtubule"/>
    <property type="evidence" value="ECO:0000250"/>
    <property type="project" value="UniProtKB"/>
</dbReference>
<dbReference type="GO" id="GO:0051726">
    <property type="term" value="P:regulation of cell cycle"/>
    <property type="evidence" value="ECO:0000303"/>
    <property type="project" value="UniProtKB"/>
</dbReference>
<dbReference type="GO" id="GO:2000114">
    <property type="term" value="P:regulation of establishment of cell polarity"/>
    <property type="evidence" value="ECO:0000250"/>
    <property type="project" value="UniProtKB"/>
</dbReference>
<dbReference type="GO" id="GO:0007088">
    <property type="term" value="P:regulation of mitotic nuclear division"/>
    <property type="evidence" value="ECO:0000303"/>
    <property type="project" value="UniProtKB"/>
</dbReference>
<dbReference type="CDD" id="cd01368">
    <property type="entry name" value="KISc_KIF23_like"/>
    <property type="match status" value="1"/>
</dbReference>
<dbReference type="CDD" id="cd21786">
    <property type="entry name" value="RBD_KIF20B"/>
    <property type="match status" value="1"/>
</dbReference>
<dbReference type="Gene3D" id="3.40.850.10">
    <property type="entry name" value="Kinesin motor domain"/>
    <property type="match status" value="1"/>
</dbReference>
<dbReference type="InterPro" id="IPR047149">
    <property type="entry name" value="KIF11-like"/>
</dbReference>
<dbReference type="InterPro" id="IPR019821">
    <property type="entry name" value="Kinesin_motor_CS"/>
</dbReference>
<dbReference type="InterPro" id="IPR001752">
    <property type="entry name" value="Kinesin_motor_dom"/>
</dbReference>
<dbReference type="InterPro" id="IPR036961">
    <property type="entry name" value="Kinesin_motor_dom_sf"/>
</dbReference>
<dbReference type="InterPro" id="IPR027417">
    <property type="entry name" value="P-loop_NTPase"/>
</dbReference>
<dbReference type="PANTHER" id="PTHR47970:SF29">
    <property type="entry name" value="KINESIN FAMILY MEMBER 20B"/>
    <property type="match status" value="1"/>
</dbReference>
<dbReference type="PANTHER" id="PTHR47970">
    <property type="entry name" value="KINESIN-LIKE PROTEIN KIF11"/>
    <property type="match status" value="1"/>
</dbReference>
<dbReference type="Pfam" id="PF00225">
    <property type="entry name" value="Kinesin"/>
    <property type="match status" value="1"/>
</dbReference>
<dbReference type="PRINTS" id="PR00380">
    <property type="entry name" value="KINESINHEAVY"/>
</dbReference>
<dbReference type="SMART" id="SM00129">
    <property type="entry name" value="KISc"/>
    <property type="match status" value="1"/>
</dbReference>
<dbReference type="SUPFAM" id="SSF52540">
    <property type="entry name" value="P-loop containing nucleoside triphosphate hydrolases"/>
    <property type="match status" value="1"/>
</dbReference>
<dbReference type="PROSITE" id="PS00411">
    <property type="entry name" value="KINESIN_MOTOR_1"/>
    <property type="match status" value="1"/>
</dbReference>
<dbReference type="PROSITE" id="PS50067">
    <property type="entry name" value="KINESIN_MOTOR_2"/>
    <property type="match status" value="1"/>
</dbReference>
<name>KI20B_HUMAN</name>
<accession>Q96Q89</accession>
<accession>A8MXM7</accession>
<accession>O43277</accession>
<accession>Q09471</accession>
<accession>Q2KQ73</accession>
<accession>Q32NE1</accession>
<accession>Q561V3</accession>
<accession>Q58EX8</accession>
<accession>Q5T9M8</accession>
<accession>Q5T9M9</accession>
<accession>Q5T9N0</accession>
<accession>Q5T9N1</accession>
<accession>Q7KZ68</accession>
<accession>Q7Z5E0</accession>
<accession>Q7Z5E1</accession>
<accession>Q7Z6M9</accession>
<accession>Q86X82</accession>
<accession>Q9H3R8</accession>
<accession>Q9H6Q9</accession>
<accession>Q9H755</accession>
<accession>Q9NTC1</accession>
<accession>Q9UFR5</accession>
<protein>
    <recommendedName>
        <fullName evidence="21">Kinesin-like protein KIF20B</fullName>
    </recommendedName>
    <alternativeName>
        <fullName>Cancer/testis antigen 90</fullName>
        <shortName>CT90</shortName>
    </alternativeName>
    <alternativeName>
        <fullName evidence="22">Kinesin family member 20B</fullName>
    </alternativeName>
    <alternativeName>
        <fullName evidence="15">Kinesin-related motor interacting with PIN1</fullName>
    </alternativeName>
    <alternativeName>
        <fullName evidence="16">M-phase phosphoprotein 1</fullName>
        <shortName evidence="16">MPP1</shortName>
    </alternativeName>
</protein>
<reference key="1">
    <citation type="journal article" date="2001" name="J. Biol. Chem.">
        <title>Identification of a novel kinesin-related protein, KRMP1, as a target for mitotic peptidyl-prolyl isomerase Pin1.</title>
        <authorList>
            <person name="Kamimoto T."/>
            <person name="Zama T."/>
            <person name="Aoki R."/>
            <person name="Muro Y."/>
            <person name="Hagiwara M."/>
        </authorList>
    </citation>
    <scope>NUCLEOTIDE SEQUENCE [MRNA] (ISOFORMS 1 AND 2)</scope>
    <scope>FUNCTION</scope>
    <scope>SUBUNIT</scope>
    <scope>SUBCELLULAR LOCATION</scope>
    <scope>INTERACTION WITH PIN1</scope>
    <scope>PHOSPHORYLATION AT THR-1644</scope>
    <scope>VARIANTS ILE-756; LEU-789 AND ARG-1177</scope>
</reference>
<reference key="2">
    <citation type="journal article" date="2001" name="Genome Res.">
        <title>Towards a catalog of human genes and proteins: sequencing and analysis of 500 novel complete protein coding human cDNAs.</title>
        <authorList>
            <person name="Wiemann S."/>
            <person name="Weil B."/>
            <person name="Wellenreuther R."/>
            <person name="Gassenhuber J."/>
            <person name="Glassl S."/>
            <person name="Ansorge W."/>
            <person name="Boecher M."/>
            <person name="Bloecker H."/>
            <person name="Bauersachs S."/>
            <person name="Blum H."/>
            <person name="Lauber J."/>
            <person name="Duesterhoeft A."/>
            <person name="Beyer A."/>
            <person name="Koehrer K."/>
            <person name="Strack N."/>
            <person name="Mewes H.-W."/>
            <person name="Ottenwaelder B."/>
            <person name="Obermaier B."/>
            <person name="Tampe J."/>
            <person name="Heubner D."/>
            <person name="Wambutt R."/>
            <person name="Korn B."/>
            <person name="Klein M."/>
            <person name="Poustka A."/>
        </authorList>
    </citation>
    <scope>NUCLEOTIDE SEQUENCE [LARGE SCALE MRNA] (ISOFORM 3)</scope>
    <scope>VARIANTS ASP-490 AND ARG-1177</scope>
    <source>
        <tissue>Testis</tissue>
    </source>
</reference>
<reference key="3">
    <citation type="journal article" date="2004" name="Nat. Genet.">
        <title>Complete sequencing and characterization of 21,243 full-length human cDNAs.</title>
        <authorList>
            <person name="Ota T."/>
            <person name="Suzuki Y."/>
            <person name="Nishikawa T."/>
            <person name="Otsuki T."/>
            <person name="Sugiyama T."/>
            <person name="Irie R."/>
            <person name="Wakamatsu A."/>
            <person name="Hayashi K."/>
            <person name="Sato H."/>
            <person name="Nagai K."/>
            <person name="Kimura K."/>
            <person name="Makita H."/>
            <person name="Sekine M."/>
            <person name="Obayashi M."/>
            <person name="Nishi T."/>
            <person name="Shibahara T."/>
            <person name="Tanaka T."/>
            <person name="Ishii S."/>
            <person name="Yamamoto J."/>
            <person name="Saito K."/>
            <person name="Kawai Y."/>
            <person name="Isono Y."/>
            <person name="Nakamura Y."/>
            <person name="Nagahari K."/>
            <person name="Murakami K."/>
            <person name="Yasuda T."/>
            <person name="Iwayanagi T."/>
            <person name="Wagatsuma M."/>
            <person name="Shiratori A."/>
            <person name="Sudo H."/>
            <person name="Hosoiri T."/>
            <person name="Kaku Y."/>
            <person name="Kodaira H."/>
            <person name="Kondo H."/>
            <person name="Sugawara M."/>
            <person name="Takahashi M."/>
            <person name="Kanda K."/>
            <person name="Yokoi T."/>
            <person name="Furuya T."/>
            <person name="Kikkawa E."/>
            <person name="Omura Y."/>
            <person name="Abe K."/>
            <person name="Kamihara K."/>
            <person name="Katsuta N."/>
            <person name="Sato K."/>
            <person name="Tanikawa M."/>
            <person name="Yamazaki M."/>
            <person name="Ninomiya K."/>
            <person name="Ishibashi T."/>
            <person name="Yamashita H."/>
            <person name="Murakawa K."/>
            <person name="Fujimori K."/>
            <person name="Tanai H."/>
            <person name="Kimata M."/>
            <person name="Watanabe M."/>
            <person name="Hiraoka S."/>
            <person name="Chiba Y."/>
            <person name="Ishida S."/>
            <person name="Ono Y."/>
            <person name="Takiguchi S."/>
            <person name="Watanabe S."/>
            <person name="Yosida M."/>
            <person name="Hotuta T."/>
            <person name="Kusano J."/>
            <person name="Kanehori K."/>
            <person name="Takahashi-Fujii A."/>
            <person name="Hara H."/>
            <person name="Tanase T.-O."/>
            <person name="Nomura Y."/>
            <person name="Togiya S."/>
            <person name="Komai F."/>
            <person name="Hara R."/>
            <person name="Takeuchi K."/>
            <person name="Arita M."/>
            <person name="Imose N."/>
            <person name="Musashino K."/>
            <person name="Yuuki H."/>
            <person name="Oshima A."/>
            <person name="Sasaki N."/>
            <person name="Aotsuka S."/>
            <person name="Yoshikawa Y."/>
            <person name="Matsunawa H."/>
            <person name="Ichihara T."/>
            <person name="Shiohata N."/>
            <person name="Sano S."/>
            <person name="Moriya S."/>
            <person name="Momiyama H."/>
            <person name="Satoh N."/>
            <person name="Takami S."/>
            <person name="Terashima Y."/>
            <person name="Suzuki O."/>
            <person name="Nakagawa S."/>
            <person name="Senoh A."/>
            <person name="Mizoguchi H."/>
            <person name="Goto Y."/>
            <person name="Shimizu F."/>
            <person name="Wakebe H."/>
            <person name="Hishigaki H."/>
            <person name="Watanabe T."/>
            <person name="Sugiyama A."/>
            <person name="Takemoto M."/>
            <person name="Kawakami B."/>
            <person name="Yamazaki M."/>
            <person name="Watanabe K."/>
            <person name="Kumagai A."/>
            <person name="Itakura S."/>
            <person name="Fukuzumi Y."/>
            <person name="Fujimori Y."/>
            <person name="Komiyama M."/>
            <person name="Tashiro H."/>
            <person name="Tanigami A."/>
            <person name="Fujiwara T."/>
            <person name="Ono T."/>
            <person name="Yamada K."/>
            <person name="Fujii Y."/>
            <person name="Ozaki K."/>
            <person name="Hirao M."/>
            <person name="Ohmori Y."/>
            <person name="Kawabata A."/>
            <person name="Hikiji T."/>
            <person name="Kobatake N."/>
            <person name="Inagaki H."/>
            <person name="Ikema Y."/>
            <person name="Okamoto S."/>
            <person name="Okitani R."/>
            <person name="Kawakami T."/>
            <person name="Noguchi S."/>
            <person name="Itoh T."/>
            <person name="Shigeta K."/>
            <person name="Senba T."/>
            <person name="Matsumura K."/>
            <person name="Nakajima Y."/>
            <person name="Mizuno T."/>
            <person name="Morinaga M."/>
            <person name="Sasaki M."/>
            <person name="Togashi T."/>
            <person name="Oyama M."/>
            <person name="Hata H."/>
            <person name="Watanabe M."/>
            <person name="Komatsu T."/>
            <person name="Mizushima-Sugano J."/>
            <person name="Satoh T."/>
            <person name="Shirai Y."/>
            <person name="Takahashi Y."/>
            <person name="Nakagawa K."/>
            <person name="Okumura K."/>
            <person name="Nagase T."/>
            <person name="Nomura N."/>
            <person name="Kikuchi H."/>
            <person name="Masuho Y."/>
            <person name="Yamashita R."/>
            <person name="Nakai K."/>
            <person name="Yada T."/>
            <person name="Nakamura Y."/>
            <person name="Ohara O."/>
            <person name="Isogai T."/>
            <person name="Sugano S."/>
        </authorList>
    </citation>
    <scope>NUCLEOTIDE SEQUENCE [LARGE SCALE MRNA] (ISOFORM 5)</scope>
    <scope>NUCLEOTIDE SEQUENCE [LARGE SCALE MRNA] OF 779-1480 (ISOFORMS 1/2/3/4)</scope>
    <scope>VARIANT ARG-1177</scope>
    <source>
        <tissue>Colon</tissue>
    </source>
</reference>
<reference key="4">
    <citation type="journal article" date="2004" name="Nature">
        <title>The DNA sequence and comparative analysis of human chromosome 10.</title>
        <authorList>
            <person name="Deloukas P."/>
            <person name="Earthrowl M.E."/>
            <person name="Grafham D.V."/>
            <person name="Rubenfield M."/>
            <person name="French L."/>
            <person name="Steward C.A."/>
            <person name="Sims S.K."/>
            <person name="Jones M.C."/>
            <person name="Searle S."/>
            <person name="Scott C."/>
            <person name="Howe K."/>
            <person name="Hunt S.E."/>
            <person name="Andrews T.D."/>
            <person name="Gilbert J.G.R."/>
            <person name="Swarbreck D."/>
            <person name="Ashurst J.L."/>
            <person name="Taylor A."/>
            <person name="Battles J."/>
            <person name="Bird C.P."/>
            <person name="Ainscough R."/>
            <person name="Almeida J.P."/>
            <person name="Ashwell R.I.S."/>
            <person name="Ambrose K.D."/>
            <person name="Babbage A.K."/>
            <person name="Bagguley C.L."/>
            <person name="Bailey J."/>
            <person name="Banerjee R."/>
            <person name="Bates K."/>
            <person name="Beasley H."/>
            <person name="Bray-Allen S."/>
            <person name="Brown A.J."/>
            <person name="Brown J.Y."/>
            <person name="Burford D.C."/>
            <person name="Burrill W."/>
            <person name="Burton J."/>
            <person name="Cahill P."/>
            <person name="Camire D."/>
            <person name="Carter N.P."/>
            <person name="Chapman J.C."/>
            <person name="Clark S.Y."/>
            <person name="Clarke G."/>
            <person name="Clee C.M."/>
            <person name="Clegg S."/>
            <person name="Corby N."/>
            <person name="Coulson A."/>
            <person name="Dhami P."/>
            <person name="Dutta I."/>
            <person name="Dunn M."/>
            <person name="Faulkner L."/>
            <person name="Frankish A."/>
            <person name="Frankland J.A."/>
            <person name="Garner P."/>
            <person name="Garnett J."/>
            <person name="Gribble S."/>
            <person name="Griffiths C."/>
            <person name="Grocock R."/>
            <person name="Gustafson E."/>
            <person name="Hammond S."/>
            <person name="Harley J.L."/>
            <person name="Hart E."/>
            <person name="Heath P.D."/>
            <person name="Ho T.P."/>
            <person name="Hopkins B."/>
            <person name="Horne J."/>
            <person name="Howden P.J."/>
            <person name="Huckle E."/>
            <person name="Hynds C."/>
            <person name="Johnson C."/>
            <person name="Johnson D."/>
            <person name="Kana A."/>
            <person name="Kay M."/>
            <person name="Kimberley A.M."/>
            <person name="Kershaw J.K."/>
            <person name="Kokkinaki M."/>
            <person name="Laird G.K."/>
            <person name="Lawlor S."/>
            <person name="Lee H.M."/>
            <person name="Leongamornlert D.A."/>
            <person name="Laird G."/>
            <person name="Lloyd C."/>
            <person name="Lloyd D.M."/>
            <person name="Loveland J."/>
            <person name="Lovell J."/>
            <person name="McLaren S."/>
            <person name="McLay K.E."/>
            <person name="McMurray A."/>
            <person name="Mashreghi-Mohammadi M."/>
            <person name="Matthews L."/>
            <person name="Milne S."/>
            <person name="Nickerson T."/>
            <person name="Nguyen M."/>
            <person name="Overton-Larty E."/>
            <person name="Palmer S.A."/>
            <person name="Pearce A.V."/>
            <person name="Peck A.I."/>
            <person name="Pelan S."/>
            <person name="Phillimore B."/>
            <person name="Porter K."/>
            <person name="Rice C.M."/>
            <person name="Rogosin A."/>
            <person name="Ross M.T."/>
            <person name="Sarafidou T."/>
            <person name="Sehra H.K."/>
            <person name="Shownkeen R."/>
            <person name="Skuce C.D."/>
            <person name="Smith M."/>
            <person name="Standring L."/>
            <person name="Sycamore N."/>
            <person name="Tester J."/>
            <person name="Thorpe A."/>
            <person name="Torcasso W."/>
            <person name="Tracey A."/>
            <person name="Tromans A."/>
            <person name="Tsolas J."/>
            <person name="Wall M."/>
            <person name="Walsh J."/>
            <person name="Wang H."/>
            <person name="Weinstock K."/>
            <person name="West A.P."/>
            <person name="Willey D.L."/>
            <person name="Whitehead S.L."/>
            <person name="Wilming L."/>
            <person name="Wray P.W."/>
            <person name="Young L."/>
            <person name="Chen Y."/>
            <person name="Lovering R.C."/>
            <person name="Moschonas N.K."/>
            <person name="Siebert R."/>
            <person name="Fechtel K."/>
            <person name="Bentley D."/>
            <person name="Durbin R.M."/>
            <person name="Hubbard T."/>
            <person name="Doucette-Stamm L."/>
            <person name="Beck S."/>
            <person name="Smith D.R."/>
            <person name="Rogers J."/>
        </authorList>
    </citation>
    <scope>NUCLEOTIDE SEQUENCE [LARGE SCALE GENOMIC DNA]</scope>
</reference>
<reference key="5">
    <citation type="journal article" date="2003" name="J. Biol. Chem.">
        <title>M phase phosphoprotein 1 is a human plus-end-directed kinesin-related protein required for cytokinesis.</title>
        <authorList>
            <person name="Abaza A."/>
            <person name="Soleilhac J.-M."/>
            <person name="Westendorf J."/>
            <person name="Piel M."/>
            <person name="Crevel I."/>
            <person name="Roux A."/>
            <person name="Pirollet F."/>
        </authorList>
    </citation>
    <scope>NUCLEOTIDE SEQUENCE [MRNA] OF 1-957 (ISOFORM 3)</scope>
    <scope>NUCLEOTIDE SEQUENCE [MRNA] OF 705-1820 (ISOFORM 1)</scope>
    <scope>FUNCTION</scope>
    <scope>INTERACTION WITH MICROTUBULES</scope>
    <scope>PHOSPHORYLATION</scope>
    <scope>SUBCELLULAR LOCATION</scope>
    <scope>TISSUE SPECIFICITY</scope>
    <scope>VARIANTS ILE-756; LEU-789 AND ARG-1177</scope>
</reference>
<reference key="6">
    <citation type="journal article" date="2004" name="Genome Res.">
        <title>The status, quality, and expansion of the NIH full-length cDNA project: the Mammalian Gene Collection (MGC).</title>
        <authorList>
            <consortium name="The MGC Project Team"/>
        </authorList>
    </citation>
    <scope>NUCLEOTIDE SEQUENCE [LARGE SCALE MRNA] OF 1-740 (ISOFORM 3)</scope>
    <scope>VARIANT ASP-490</scope>
    <source>
        <tissue>Lung</tissue>
        <tissue>Lymph</tissue>
        <tissue>Testis</tissue>
    </source>
</reference>
<reference key="7">
    <citation type="journal article" date="2007" name="BMC Genomics">
        <title>The full-ORF clone resource of the German cDNA consortium.</title>
        <authorList>
            <person name="Bechtel S."/>
            <person name="Rosenfelder H."/>
            <person name="Duda A."/>
            <person name="Schmidt C.P."/>
            <person name="Ernst U."/>
            <person name="Wellenreuther R."/>
            <person name="Mehrle A."/>
            <person name="Schuster C."/>
            <person name="Bahr A."/>
            <person name="Bloecker H."/>
            <person name="Heubner D."/>
            <person name="Hoerlein A."/>
            <person name="Michel G."/>
            <person name="Wedler H."/>
            <person name="Koehrer K."/>
            <person name="Ottenwaelder B."/>
            <person name="Poustka A."/>
            <person name="Wiemann S."/>
            <person name="Schupp I."/>
        </authorList>
    </citation>
    <scope>NUCLEOTIDE SEQUENCE [LARGE SCALE MRNA] OF 575-1820 (ISOFORM 3)</scope>
    <source>
        <tissue>Testis</tissue>
    </source>
</reference>
<reference key="8">
    <citation type="journal article" date="2000" name="J. Invest. Med.">
        <title>Autoantibodies from patients with idiopathic ataxia bind to M-phase phosphoprotein-1 (MPP1).</title>
        <authorList>
            <person name="Fritzler M.J."/>
            <person name="Kerfoot S.M."/>
            <person name="Feasby T.E."/>
            <person name="Zochodne D.W."/>
            <person name="Westendorf J.M."/>
            <person name="Dalmau J.O."/>
            <person name="Chan E.K."/>
        </authorList>
    </citation>
    <scope>NUCLEOTIDE SEQUENCE [MRNA] OF 1068-1820 (ISOFORMS 1/2/3)</scope>
    <scope>VARIANT ARG-1177</scope>
</reference>
<reference key="9">
    <citation type="submission" date="2004-09" db="EMBL/GenBank/DDBJ databases">
        <title>Anti-leukemia-specific humoral immune response in children with T-lineage acute lymphoblastic leukemia.</title>
        <authorList>
            <person name="Dohnal A.M."/>
            <person name="Panzer-Gruemayer R.E."/>
        </authorList>
    </citation>
    <scope>NUCLEOTIDE SEQUENCE [MRNA] OF 1106-1820 (ISOFORM 4)</scope>
    <scope>VARIANT ARG-1177</scope>
</reference>
<reference key="10">
    <citation type="journal article" date="1994" name="Proc. Natl. Acad. Sci. U.S.A.">
        <title>Cloning of cDNAs for M-phase phosphoproteins recognized by the MPM2 monoclonal antibody and determination of the phosphorylated epitope.</title>
        <authorList>
            <person name="Westendorf J.M."/>
            <person name="Rao P.N."/>
            <person name="Gerace L."/>
        </authorList>
    </citation>
    <scope>NUCLEOTIDE SEQUENCE [MRNA] OF 1255-1820 (ISOFORMS 1/2/3)</scope>
</reference>
<reference key="11">
    <citation type="journal article" date="2007" name="Cancer Res.">
        <title>Oncogenic role of MPHOSPH1, a cancer-testis antigen specific to human bladder cancer.</title>
        <authorList>
            <person name="Kanehira M."/>
            <person name="Katagiri T."/>
            <person name="Shimo A."/>
            <person name="Takata R."/>
            <person name="Shuin T."/>
            <person name="Miki T."/>
            <person name="Fujioka T."/>
            <person name="Nakamura Y."/>
        </authorList>
    </citation>
    <scope>FUNCTION</scope>
    <scope>INTERACTION WITH PRC1</scope>
    <scope>SUBCELLULAR LOCATION</scope>
    <scope>TISSUE SPECIFICITY</scope>
</reference>
<reference key="12">
    <citation type="journal article" date="2007" name="Science">
        <title>ATM and ATR substrate analysis reveals extensive protein networks responsive to DNA damage.</title>
        <authorList>
            <person name="Matsuoka S."/>
            <person name="Ballif B.A."/>
            <person name="Smogorzewska A."/>
            <person name="McDonald E.R. III"/>
            <person name="Hurov K.E."/>
            <person name="Luo J."/>
            <person name="Bakalarski C.E."/>
            <person name="Zhao Z."/>
            <person name="Solimini N."/>
            <person name="Lerenthal Y."/>
            <person name="Shiloh Y."/>
            <person name="Gygi S.P."/>
            <person name="Elledge S.J."/>
        </authorList>
    </citation>
    <scope>PHOSPHORYLATION [LARGE SCALE ANALYSIS] AT SER-488</scope>
    <scope>IDENTIFICATION BY MASS SPECTROMETRY [LARGE SCALE ANALYSIS]</scope>
    <source>
        <tissue>Embryonic kidney</tissue>
    </source>
</reference>
<reference key="13">
    <citation type="journal article" date="2011" name="Sci. Signal.">
        <title>System-wide temporal characterization of the proteome and phosphoproteome of human embryonic stem cell differentiation.</title>
        <authorList>
            <person name="Rigbolt K.T."/>
            <person name="Prokhorova T.A."/>
            <person name="Akimov V."/>
            <person name="Henningsen J."/>
            <person name="Johansen P.T."/>
            <person name="Kratchmarova I."/>
            <person name="Kassem M."/>
            <person name="Mann M."/>
            <person name="Olsen J.V."/>
            <person name="Blagoev B."/>
        </authorList>
    </citation>
    <scope>PHOSPHORYLATION [LARGE SCALE ANALYSIS] AT SER-1658</scope>
    <scope>IDENTIFICATION BY MASS SPECTROMETRY [LARGE SCALE ANALYSIS]</scope>
</reference>
<reference key="14">
    <citation type="journal article" date="2013" name="J. Proteome Res.">
        <title>Toward a comprehensive characterization of a human cancer cell phosphoproteome.</title>
        <authorList>
            <person name="Zhou H."/>
            <person name="Di Palma S."/>
            <person name="Preisinger C."/>
            <person name="Peng M."/>
            <person name="Polat A.N."/>
            <person name="Heck A.J."/>
            <person name="Mohammed S."/>
        </authorList>
    </citation>
    <scope>PHOSPHORYLATION [LARGE SCALE ANALYSIS] AT THR-560; SER-1588; SER-1658; SER-1715 AND SER-1740</scope>
    <scope>IDENTIFICATION BY MASS SPECTROMETRY [LARGE SCALE ANALYSIS]</scope>
    <source>
        <tissue>Cervix carcinoma</tissue>
        <tissue>Erythroleukemia</tissue>
    </source>
</reference>
<reference key="15">
    <citation type="journal article" date="2015" name="Am. J. Hum. Genet.">
        <title>Joubert Syndrome in French Canadians and Identification of Mutations in CEP104.</title>
        <authorList>
            <consortium name="Care4Rare Canada Consortium"/>
            <person name="Srour M."/>
            <person name="Hamdan F.F."/>
            <person name="McKnight D."/>
            <person name="Davis E."/>
            <person name="Mandel H."/>
            <person name="Schwartzentruber J."/>
            <person name="Martin B."/>
            <person name="Patry L."/>
            <person name="Nassif C."/>
            <person name="Dionne-Laporte A."/>
            <person name="Ospina L.H."/>
            <person name="Lemyre E."/>
            <person name="Massicotte C."/>
            <person name="Laframboise R."/>
            <person name="Maranda B."/>
            <person name="Labuda D."/>
            <person name="Decarie J.C."/>
            <person name="Rypens F."/>
            <person name="Goldsher D."/>
            <person name="Fallet-Bianco C."/>
            <person name="Soucy J.F."/>
            <person name="Laberge A.M."/>
            <person name="Maftei C."/>
            <person name="Boycott K."/>
            <person name="Brais B."/>
            <person name="Boucher R.M."/>
            <person name="Rouleau G.A."/>
            <person name="Katsanis N."/>
            <person name="Majewski J."/>
            <person name="Elpeleg O."/>
            <person name="Kukolich M.K."/>
            <person name="Shalev S."/>
            <person name="Michaud J.L."/>
        </authorList>
    </citation>
    <scope>VARIANTS VAL-1148 AND TYR-1589</scope>
</reference>
<comment type="function">
    <text evidence="1 7 8 11">Plus-end-directed motor enzyme that is required for completion of cytokinesis (PubMed:11470801, PubMed:12740395). Required for proper midbody organization and abscission in polarized cortical stem cells. Plays a role in the regulation of neuronal polarization by mediating the transport of specific cargos. Participates in the mobilization of SHTN1 and in the accumulation of PIP3 in the growth cone of primary hippocampal neurons in a tubulin and actin-dependent manner. In the developing telencephalon, cooperates with SHTN1 to promote both the transition from the multipolar to the bipolar stage and the radial migration of cortical neurons from the ventricular zone toward the superficial layer of the neocortex. Involved in cerebral cortex growth (By similarity). Acts as an oncogene for promoting bladder cancer cells proliferation, apoptosis inhibition and carcinogenic progression (PubMed:17409436).</text>
</comment>
<comment type="subunit">
    <text evidence="1 7 8 11">Oligomerizes (via kinesin motor domain) (PubMed:11470801). Associates with microtubules (PubMed:12740395). Interacts (via C-terminal globular tail region) with PIN1 (via WW domain) (PubMed:11470801). Interacts with PRC1 (PubMed:17409436). Interacts with SHTN1 (via N-terminus); the interaction is direct and promotes the association of SHTN1 to microtubules in primary neurons.</text>
</comment>
<comment type="subcellular location">
    <subcellularLocation>
        <location evidence="8 11">Nucleus</location>
    </subcellularLocation>
    <subcellularLocation>
        <location evidence="7">Cytoplasm</location>
        <location evidence="7">Cytoskeleton</location>
        <location evidence="7">Microtubule organizing center</location>
        <location evidence="7">Centrosome</location>
    </subcellularLocation>
    <subcellularLocation>
        <location evidence="7">Nucleus</location>
        <location evidence="7">Nucleolus</location>
    </subcellularLocation>
    <subcellularLocation>
        <location evidence="7">Nucleus</location>
        <location evidence="7">Nucleoplasm</location>
    </subcellularLocation>
    <subcellularLocation>
        <location evidence="7 8">Cytoplasm</location>
        <location evidence="7 8">Cytoskeleton</location>
        <location evidence="7 8">Spindle</location>
    </subcellularLocation>
    <subcellularLocation>
        <location evidence="7">Cytoplasm</location>
        <location evidence="7">Cytoskeleton</location>
        <location evidence="7">Spindle pole</location>
    </subcellularLocation>
    <subcellularLocation>
        <location evidence="8 11">Midbody</location>
    </subcellularLocation>
    <subcellularLocation>
        <location evidence="1">Cell projection</location>
        <location evidence="1">Axon</location>
    </subcellularLocation>
    <subcellularLocation>
        <location evidence="1">Cell projection</location>
        <location evidence="1">Growth cone</location>
    </subcellularLocation>
    <text evidence="1 8 11">Localizes mainly in the nucleus during interphase although it is also detected in the cytoplasm without clear association with microtubules (PubMed:12740395). Localized to the central spindle during cytokinetic furrowing and with the midbody during abscission (PubMed:12740395, PubMed:17409436). A 2-3 fold expression increase is seen as cells progress from G1 to G2/M phase (PubMed:12740395). During prophase and metaphase it is found throughout the cytoplasm and at anaphase accumulates at the midplan of the cell and forms a distinct band extending across the spindle midzone (PubMed:12740395). At anaphase it is concentrated in the midbody (PubMed:12740395). Colocalized partially along microtubules in primary neurons. Colocalized with SHTN1 along microtubules to the tip of the growing cone in primary hippocampal neurons. Localized in midbodies between dividing radial progenitors in the ventricular zone (By similarity). Colocalized with PRC1 in the nucleus of bladder carcinoma cells at the interphase. Colocalized with PRC1 in bladder carcinoma cells at prophase, metaphase, early anaphase, at the midzone in late anaphase and at the contractile ring in telophase (PubMed:17409436).</text>
</comment>
<comment type="alternative products">
    <event type="alternative splicing"/>
    <isoform>
        <id>Q96Q89-1</id>
        <name>1</name>
        <sequence type="displayed"/>
    </isoform>
    <isoform>
        <id>Q96Q89-2</id>
        <name>2</name>
        <sequence type="described" ref="VSP_022620"/>
    </isoform>
    <isoform>
        <id>Q96Q89-3</id>
        <name>3</name>
        <sequence type="described" ref="VSP_022619"/>
    </isoform>
    <isoform>
        <id>Q96Q89-4</id>
        <name>4</name>
        <sequence type="described" ref="VSP_022621 VSP_022622"/>
    </isoform>
    <isoform>
        <id>Q96Q89-5</id>
        <name>5</name>
        <sequence type="described" ref="VSP_022618"/>
    </isoform>
</comment>
<comment type="tissue specificity">
    <text evidence="8 11">Brain, ovary, kidney and testis (at protein level) (PubMed:12740395). Overexpressed in bladder cancer cells (at protein level) (PubMed:17409436). Expressed in testis. Overexpressed in bladder cancer cells (PubMed:17409436).</text>
</comment>
<comment type="PTM">
    <text evidence="7 8">Phosphorylated during mitosis by CDK1 (PubMed:11470801, PubMed:12740395).</text>
</comment>
<comment type="similarity">
    <text evidence="3">Belongs to the TRAFAC class myosin-kinesin ATPase superfamily. Kinesin family.</text>
</comment>
<comment type="sequence caution" evidence="21">
    <conflict type="miscellaneous discrepancy">
        <sequence resource="EMBL-CDS" id="AAH46134"/>
    </conflict>
    <text>Contaminating sequence. Potential poly-A sequence.</text>
</comment>
<comment type="sequence caution" evidence="21">
    <conflict type="miscellaneous discrepancy">
        <sequence resource="EMBL-CDS" id="AAH58913"/>
    </conflict>
    <text>Contaminating sequence. Potential poly-A sequence.</text>
</comment>
<comment type="sequence caution" evidence="21">
    <conflict type="miscellaneous discrepancy">
        <sequence resource="EMBL-CDS" id="AAH93089"/>
    </conflict>
    <text>Contaminating sequence. Potential poly-A sequence.</text>
</comment>
<comment type="sequence caution" evidence="21">
    <conflict type="miscellaneous discrepancy">
        <sequence resource="EMBL-CDS" id="AAI08689"/>
    </conflict>
    <text>Contaminating sequence. Potential poly-A sequence.</text>
</comment>
<comment type="sequence caution" evidence="21">
    <conflict type="miscellaneous discrepancy">
        <sequence resource="EMBL-CDS" id="BAB15043"/>
    </conflict>
    <text>Contaminating sequence. Potential poly-A sequence.</text>
</comment>
<feature type="chain" id="PRO_0000274053" description="Kinesin-like protein KIF20B">
    <location>
        <begin position="1"/>
        <end position="1820"/>
    </location>
</feature>
<feature type="domain" description="Kinesin motor" evidence="3">
    <location>
        <begin position="58"/>
        <end position="479"/>
    </location>
</feature>
<feature type="region of interest" description="Disordered" evidence="4">
    <location>
        <begin position="829"/>
        <end position="866"/>
    </location>
</feature>
<feature type="region of interest" description="Necessary and sufficient for interaction with SHTN1" evidence="1">
    <location>
        <begin position="1050"/>
        <end position="1107"/>
    </location>
</feature>
<feature type="region of interest" description="Disordered" evidence="4">
    <location>
        <begin position="1247"/>
        <end position="1275"/>
    </location>
</feature>
<feature type="region of interest" description="Interaction with PIN1" evidence="7">
    <location>
        <begin position="1560"/>
        <end position="1820"/>
    </location>
</feature>
<feature type="region of interest" description="Disordered" evidence="4">
    <location>
        <begin position="1760"/>
        <end position="1781"/>
    </location>
</feature>
<feature type="coiled-coil region" evidence="2">
    <location>
        <begin position="523"/>
        <end position="603"/>
    </location>
</feature>
<feature type="coiled-coil region" evidence="2">
    <location>
        <begin position="674"/>
        <end position="793"/>
    </location>
</feature>
<feature type="compositionally biased region" description="Basic and acidic residues" evidence="4">
    <location>
        <begin position="1247"/>
        <end position="1264"/>
    </location>
</feature>
<feature type="compositionally biased region" description="Polar residues" evidence="4">
    <location>
        <begin position="1265"/>
        <end position="1274"/>
    </location>
</feature>
<feature type="compositionally biased region" description="Polar residues" evidence="4">
    <location>
        <begin position="1760"/>
        <end position="1772"/>
    </location>
</feature>
<feature type="binding site" evidence="3">
    <location>
        <begin position="152"/>
        <end position="159"/>
    </location>
    <ligand>
        <name>ATP</name>
        <dbReference type="ChEBI" id="CHEBI:30616"/>
    </ligand>
</feature>
<feature type="modified residue" description="Phosphoserine" evidence="23">
    <location>
        <position position="488"/>
    </location>
</feature>
<feature type="modified residue" description="Phosphothreonine" evidence="25">
    <location>
        <position position="560"/>
    </location>
</feature>
<feature type="modified residue" description="Phosphoserine" evidence="1">
    <location>
        <position position="997"/>
    </location>
</feature>
<feature type="modified residue" description="Phosphoserine" evidence="25">
    <location>
        <position position="1588"/>
    </location>
</feature>
<feature type="modified residue" description="Phosphothreonine; by CDK1" evidence="7">
    <location>
        <position position="1644"/>
    </location>
</feature>
<feature type="modified residue" description="Phosphoserine" evidence="24 25">
    <location>
        <position position="1658"/>
    </location>
</feature>
<feature type="modified residue" description="Phosphoserine" evidence="25">
    <location>
        <position position="1715"/>
    </location>
</feature>
<feature type="modified residue" description="Phosphoserine" evidence="25">
    <location>
        <position position="1740"/>
    </location>
</feature>
<feature type="splice variant" id="VSP_022618" description="In isoform 5." evidence="17">
    <location>
        <begin position="1"/>
        <end position="1308"/>
    </location>
</feature>
<feature type="splice variant" id="VSP_022619" description="In isoform 3." evidence="14 16 18 19">
    <location>
        <begin position="668"/>
        <end position="707"/>
    </location>
</feature>
<feature type="splice variant" id="VSP_022620" description="In isoform 2." evidence="15">
    <original>G</original>
    <variation>GTTSAASSRRLRKLISKPKKGVNRTRQTEGHSLV</variation>
    <location>
        <position position="849"/>
    </location>
</feature>
<feature type="splice variant" id="VSP_022621" description="In isoform 4." evidence="20">
    <original>DLVKCENKKNATPRTNLKFPISDDRNSSVKKEQKVAIRPSSKKTYSLRSQASIIGVNLA</original>
    <variation>SASPPPKECSSSPAMEQSWKENDFDKLREEGFRRSNYSELQEEIQTKGKEVENFEKNLD</variation>
    <location>
        <begin position="1664"/>
        <end position="1722"/>
    </location>
</feature>
<feature type="splice variant" id="VSP_022622" description="In isoform 4." evidence="20">
    <location>
        <begin position="1723"/>
        <end position="1820"/>
    </location>
</feature>
<feature type="sequence variant" id="VAR_030181" description="In dbSNP:rs1129777.">
    <original>A</original>
    <variation>G</variation>
    <location>
        <position position="50"/>
    </location>
</feature>
<feature type="sequence variant" id="VAR_030182" description="In dbSNP:rs17484219." evidence="6 10">
    <original>E</original>
    <variation>D</variation>
    <location>
        <position position="490"/>
    </location>
</feature>
<feature type="sequence variant" id="VAR_030183" description="In dbSNP:rs12572012." evidence="7 8">
    <original>N</original>
    <variation>I</variation>
    <location>
        <position position="756"/>
    </location>
</feature>
<feature type="sequence variant" id="VAR_030184" description="In dbSNP:rs3758388." evidence="7 8">
    <original>H</original>
    <variation>L</variation>
    <location>
        <position position="789"/>
    </location>
</feature>
<feature type="sequence variant" id="VAR_030185" description="In dbSNP:rs1062465.">
    <original>D</original>
    <variation>E</variation>
    <location>
        <position position="1011"/>
    </location>
</feature>
<feature type="sequence variant" id="VAR_030186" description="In dbSNP:rs11185863.">
    <original>E</original>
    <variation>Q</variation>
    <location>
        <position position="1127"/>
    </location>
</feature>
<feature type="sequence variant" id="VAR_075704" description="In dbSNP:rs117564945." evidence="12">
    <original>A</original>
    <variation>V</variation>
    <location>
        <position position="1148"/>
    </location>
</feature>
<feature type="sequence variant" id="VAR_030187" description="In dbSNP:rs1886996." evidence="5 6 7 8 9 13">
    <original>C</original>
    <variation>R</variation>
    <location>
        <position position="1177"/>
    </location>
</feature>
<feature type="sequence variant" id="VAR_030188" description="In dbSNP:rs1886997.">
    <original>N</original>
    <variation>S</variation>
    <location>
        <position position="1219"/>
    </location>
</feature>
<feature type="sequence variant" id="VAR_075705" description="In dbSNP:rs117258675." evidence="12">
    <original>F</original>
    <variation>Y</variation>
    <location>
        <position position="1589"/>
    </location>
</feature>
<feature type="sequence variant" id="VAR_030189" description="In dbSNP:rs3758390.">
    <original>I</original>
    <variation>V</variation>
    <location>
        <position position="1789"/>
    </location>
</feature>
<feature type="sequence conflict" description="In Ref. 1; BAB69456." evidence="21" ref="1">
    <original>S</original>
    <variation>T</variation>
    <location>
        <position position="266"/>
    </location>
</feature>
<feature type="sequence conflict" description="In Ref. 1; BAB69456." evidence="21" ref="1">
    <original>KR</original>
    <variation>NT</variation>
    <location>
        <begin position="296"/>
        <end position="297"/>
    </location>
</feature>
<feature type="sequence conflict" description="In Ref. 1; BAB69456." evidence="21" ref="1">
    <original>V</original>
    <variation>I</variation>
    <location>
        <position position="357"/>
    </location>
</feature>
<feature type="sequence conflict" description="In Ref. 1; BAB69456." evidence="21" ref="1">
    <original>M</original>
    <variation>V</variation>
    <location>
        <position position="388"/>
    </location>
</feature>
<feature type="sequence conflict" description="In Ref. 6; AAI08689." evidence="21" ref="6">
    <original>E</original>
    <variation>K</variation>
    <location>
        <position position="593"/>
    </location>
</feature>
<feature type="sequence conflict" description="In Ref. 5; AAP40331." evidence="21" ref="5">
    <original>DPQ</original>
    <variation>ETE</variation>
    <location>
        <begin position="705"/>
        <end position="707"/>
    </location>
</feature>
<feature type="sequence conflict" description="In Ref. 1; BAB69456." evidence="21" ref="1">
    <original>E</original>
    <variation>K</variation>
    <location>
        <position position="753"/>
    </location>
</feature>
<feature type="sequence conflict" description="In Ref. 3; BAB15043." evidence="21" ref="3">
    <original>N</original>
    <variation>S</variation>
    <location>
        <position position="797"/>
    </location>
</feature>
<feature type="sequence conflict" description="In Ref. 3; BAB15043." evidence="21" ref="3">
    <original>N</original>
    <variation>S</variation>
    <location>
        <position position="870"/>
    </location>
</feature>
<feature type="sequence conflict" description="In Ref. 3; BAB15043." evidence="21" ref="3">
    <original>F</original>
    <variation>S</variation>
    <location>
        <position position="915"/>
    </location>
</feature>
<feature type="sequence conflict" description="In Ref. 3; BAB15043." evidence="21" ref="3">
    <original>K</original>
    <variation>R</variation>
    <location>
        <position position="1105"/>
    </location>
</feature>
<feature type="sequence conflict" description="In Ref. 10; AAC37542." evidence="21" ref="10">
    <original>V</original>
    <variation>E</variation>
    <location>
        <position position="1302"/>
    </location>
</feature>
<feature type="sequence conflict" description="In Ref. 10; AAC37542." evidence="21" ref="10">
    <original>R</original>
    <variation>S</variation>
    <location>
        <position position="1459"/>
    </location>
</feature>
<feature type="sequence conflict" description="In Ref. 1; BAB69456." evidence="21" ref="1">
    <original>V</original>
    <variation>A</variation>
    <location>
        <position position="1608"/>
    </location>
</feature>
<feature type="sequence conflict" description="In Ref. 2; CAB55962 and 3; BAB15194." evidence="21" ref="2 3">
    <original>K</original>
    <variation>E</variation>
    <location>
        <position position="1649"/>
    </location>
</feature>
<sequence>MESNFNQEGVPRPSYVFSADPIARPSEINFDGIKLDLSHEFSLVAPNTEANSFESKDYLQVCLRIRPFTQSEKELESEGCVHILDSQTVVLKEPQCILGRLSEKSSGQMAQKFSFSKVFGPATTQKEFFQGCIMQPVKDLLKGQSRLIFTYGLTNSGKTYTFQGTEENIGILPRTLNVLFDSLQERLYTKMNLKPHRSREYLRLSSEQEKEEIASKSALLRQIKEVTVHNDSDDTLYGSLTNSLNISEFEESIKDYEQANLNMANSIKFSVWVSFFEIYNEYIYDLFVPVSSKFQKRKMLRLSQDVKGYSFIKDLQWIQVSDSKEAYRLLKLGIKHQSVAFTKLNNASSRSHSIFTVKILQIEDSEMSRVIRVSELSLCDLAGSERTMKTQNEGERLRETGNINTSLLTLGKCINVLKNSEKSKFQQHVPFRESKLTHYFQSFFNGKGKICMIVNISQCYLAYDETLNVLKFSAIAQKVCVPDTLNSSQEKLFGPVKSSQDVSLDSNSNSKILNVKRATISWENSLEDLMEDEDLVEELENAEETQNVETKLLDEDLDKTLEENKAFISHEEKRKLLDLIEDLKKKLINEKKEKLTLEFKIREEVTQEFTQYWAQREADFKETLLQEREILEENAERRLAIFKDLVGKCDTREEAAKDICATKVETEETHNYVGFEDIIDSLQDNVADIKKQAEIAHLYIASLPDPQEATACLELKFNQIKAELAKTKGELIKTKEELKKRENESDSLIQELETSNKKIITQNQRIKELINIIDQKEDTINEFQNLKSHMENTFKCNDKADTSSLIINNKLICNETVEVPKDSKSKICSERKRVNENELQQDEPPAKKGSIHVSSAITEDQKKSEEVRPNIAEIEDIRVLQENNEGLRAFLLTIENELKNEKEEKAELNKQIVHFQQELSLSEKKNLTLSKEVQQIQSNYDIAIAELHVQKSKNQEQEEKIMKLSNEIETATRSITNNVSQIKLMHTKIDELRTLDSVSQISNIDLLNLRDLSNGSEEDNLPNTQLDLLGNDYLVSKQVKEYRIQEPNRENSFHSSIEAIWEECKEIVKASSKKSHQIEELEQQIEKLQAEVKGYKDENNRLKEKEHKNQDDLLKEKETLIQQLKEELQEKNVTLDVQIQHVVEGKRALSELTQGVTCYKAKIKELETILETQKVECSHSAKLEQDILEKESIILKLERNLKEFQEHLQDSVKNTKDLNVKELKLKEEITQLTNNLQDMKHLLQLKEEEEETNRQETEKLKEELSASSARTQNLKADLQRKEEDYADLKEKLTDAKKQIKQVQKEVSVMRDEDKLLRIKINELEKKKNQCSQELDMKQRTIQQLKEQLNNQKVEEAIQQYERACKDLNVKEKIIEDMRMTLEEQEQTQVEQDQVLEAKLEEVERLATELEKWKEKCNDLETKNNQRSNKEHENNTDVLGKLTNLQDELQESEQKYNADRKKWLEEKMMLITQAKEAENIRNKEMKKYAEDRERFFKQQNEMEILTAQLTEKDSDLQKWREERDQLVAALEIQLKALISSNVQKDNEIEQLKRIISETSKIETQIMDIKPKRISSADPDKLQTEPLSTSFEISRNKIEDGSVVLDSCEVSTENDQSTRFPKPELEIQFTPLQPNKMAVKHPGCTTPVTVKIPKARKRKSNEMEEDLVKCENKKNATPRTNLKFPISDDRNSSVKKEQKVAIRPSSKKTYSLRSQASIIGVNLATKKKEGTLQKFGDFLQHSPSILQSKAKKIIETMSSSKLSNVEASKENVSQPKRAKRKLYTSEISSPIDISGQVILMDQKMKESDHQIIKRRLRTKTAK</sequence>
<gene>
    <name evidence="22" type="primary">KIF20B</name>
    <name evidence="15" type="synonym">KRMP1</name>
    <name evidence="16" type="synonym">MPHOSPH1</name>
</gene>